<gene>
    <name evidence="1" type="primary">Nubp2</name>
    <name type="ORF">GG16127</name>
</gene>
<feature type="chain" id="PRO_0000382709" description="Cytosolic Fe-S cluster assembly factor Nubp2 homolog">
    <location>
        <begin position="1"/>
        <end position="260"/>
    </location>
</feature>
<feature type="binding site" evidence="2">
    <location>
        <begin position="14"/>
        <end position="21"/>
    </location>
    <ligand>
        <name>ATP</name>
        <dbReference type="ChEBI" id="CHEBI:30616"/>
    </ligand>
</feature>
<feature type="binding site" evidence="2">
    <location>
        <position position="188"/>
    </location>
    <ligand>
        <name>[4Fe-4S] cluster</name>
        <dbReference type="ChEBI" id="CHEBI:49883"/>
        <note>ligand shared between dimeric partners</note>
    </ligand>
</feature>
<feature type="binding site" evidence="2">
    <location>
        <position position="191"/>
    </location>
    <ligand>
        <name>[4Fe-4S] cluster</name>
        <dbReference type="ChEBI" id="CHEBI:49883"/>
        <note>ligand shared between dimeric partners</note>
    </ligand>
</feature>
<sequence length="260" mass="28192">MLEKVKNIIVVLSGKGGVGKSTVSTQLSLALRKNGFKVGLLDIDLCGPSVPYLLGLEGRDIFQCDEGWVPVYTDESQTLAVMSIGFLLKNREDPVIWRGPKKTMMIRQFLTDVRWDELDYLIIDTPPGTSDEHITVMECLKEVGCHGAIIVTTPQEVALDDVRKEITFCKKTGINILGIVENMSGFVCPHCTSCTNIFSSNGGASLATYAQVPHLGTLPIDPRVGVLAGSTTSVLDELPDSTTAEVLTHIVEKLKTISVS</sequence>
<comment type="function">
    <text evidence="2">Component of the cytosolic iron-sulfur (Fe/S) protein assembly (CIA) machinery. Required for maturation of extramitochondrial Fe-S proteins. The Nubp1-Nubp2 heterotetramer forms a Fe-S scaffold complex, mediating the de novo assembly of an Fe-S cluster and its transfer to target apoproteins.</text>
</comment>
<comment type="cofactor">
    <cofactor evidence="2">
        <name>[4Fe-4S] cluster</name>
        <dbReference type="ChEBI" id="CHEBI:49883"/>
    </cofactor>
    <text evidence="2">Binds 4 [4Fe-4S] clusters per heterotetramer. Contains two stable clusters in the N-termini of Nubp1 and two labile, bridging clusters between subunits of the Nubp1-Nubp2 heterotetramer.</text>
</comment>
<comment type="subunit">
    <text evidence="2">Heterotetramer of 2 Nubp1 and 2 Nubp2 chains.</text>
</comment>
<comment type="subcellular location">
    <subcellularLocation>
        <location evidence="2">Cytoplasm</location>
    </subcellularLocation>
</comment>
<comment type="similarity">
    <text evidence="2">Belongs to the Mrp/NBP35 ATP-binding proteins family. NUBP2/CFD1 subfamily.</text>
</comment>
<accession>B3NIP2</accession>
<name>NUBP2_DROER</name>
<protein>
    <recommendedName>
        <fullName evidence="2">Cytosolic Fe-S cluster assembly factor Nubp2 homolog</fullName>
    </recommendedName>
</protein>
<keyword id="KW-0004">4Fe-4S</keyword>
<keyword id="KW-0067">ATP-binding</keyword>
<keyword id="KW-0963">Cytoplasm</keyword>
<keyword id="KW-0408">Iron</keyword>
<keyword id="KW-0411">Iron-sulfur</keyword>
<keyword id="KW-0479">Metal-binding</keyword>
<keyword id="KW-0547">Nucleotide-binding</keyword>
<reference key="1">
    <citation type="journal article" date="2007" name="Nature">
        <title>Evolution of genes and genomes on the Drosophila phylogeny.</title>
        <authorList>
            <consortium name="Drosophila 12 genomes consortium"/>
        </authorList>
    </citation>
    <scope>NUCLEOTIDE SEQUENCE [LARGE SCALE GENOMIC DNA]</scope>
    <source>
        <strain>Tucson 14021-0224.01</strain>
    </source>
</reference>
<proteinExistence type="inferred from homology"/>
<evidence type="ECO:0000250" key="1">
    <source>
        <dbReference type="UniProtKB" id="Q9VPD2"/>
    </source>
</evidence>
<evidence type="ECO:0000255" key="2">
    <source>
        <dbReference type="HAMAP-Rule" id="MF_03039"/>
    </source>
</evidence>
<organism>
    <name type="scientific">Drosophila erecta</name>
    <name type="common">Fruit fly</name>
    <dbReference type="NCBI Taxonomy" id="7220"/>
    <lineage>
        <taxon>Eukaryota</taxon>
        <taxon>Metazoa</taxon>
        <taxon>Ecdysozoa</taxon>
        <taxon>Arthropoda</taxon>
        <taxon>Hexapoda</taxon>
        <taxon>Insecta</taxon>
        <taxon>Pterygota</taxon>
        <taxon>Neoptera</taxon>
        <taxon>Endopterygota</taxon>
        <taxon>Diptera</taxon>
        <taxon>Brachycera</taxon>
        <taxon>Muscomorpha</taxon>
        <taxon>Ephydroidea</taxon>
        <taxon>Drosophilidae</taxon>
        <taxon>Drosophila</taxon>
        <taxon>Sophophora</taxon>
    </lineage>
</organism>
<dbReference type="EMBL" id="CH954178">
    <property type="protein sequence ID" value="EDV52538.1"/>
    <property type="molecule type" value="Genomic_DNA"/>
</dbReference>
<dbReference type="SMR" id="B3NIP2"/>
<dbReference type="EnsemblMetazoa" id="FBtr0136181">
    <property type="protein sequence ID" value="FBpp0134673"/>
    <property type="gene ID" value="FBgn0108362"/>
</dbReference>
<dbReference type="EnsemblMetazoa" id="XM_001973476.3">
    <property type="protein sequence ID" value="XP_001973512.1"/>
    <property type="gene ID" value="LOC6546059"/>
</dbReference>
<dbReference type="GeneID" id="6546059"/>
<dbReference type="KEGG" id="der:6546059"/>
<dbReference type="CTD" id="10101"/>
<dbReference type="eggNOG" id="KOG3022">
    <property type="taxonomic scope" value="Eukaryota"/>
</dbReference>
<dbReference type="HOGENOM" id="CLU_024839_0_1_1"/>
<dbReference type="OMA" id="WIPVFAD"/>
<dbReference type="OrthoDB" id="1741334at2759"/>
<dbReference type="PhylomeDB" id="B3NIP2"/>
<dbReference type="Proteomes" id="UP000008711">
    <property type="component" value="Unassembled WGS sequence"/>
</dbReference>
<dbReference type="GO" id="GO:0005829">
    <property type="term" value="C:cytosol"/>
    <property type="evidence" value="ECO:0007669"/>
    <property type="project" value="TreeGrafter"/>
</dbReference>
<dbReference type="GO" id="GO:0051539">
    <property type="term" value="F:4 iron, 4 sulfur cluster binding"/>
    <property type="evidence" value="ECO:0007669"/>
    <property type="project" value="UniProtKB-UniRule"/>
</dbReference>
<dbReference type="GO" id="GO:0005524">
    <property type="term" value="F:ATP binding"/>
    <property type="evidence" value="ECO:0007669"/>
    <property type="project" value="UniProtKB-KW"/>
</dbReference>
<dbReference type="GO" id="GO:0140663">
    <property type="term" value="F:ATP-dependent FeS chaperone activity"/>
    <property type="evidence" value="ECO:0007669"/>
    <property type="project" value="InterPro"/>
</dbReference>
<dbReference type="GO" id="GO:0046872">
    <property type="term" value="F:metal ion binding"/>
    <property type="evidence" value="ECO:0007669"/>
    <property type="project" value="UniProtKB-KW"/>
</dbReference>
<dbReference type="GO" id="GO:0016226">
    <property type="term" value="P:iron-sulfur cluster assembly"/>
    <property type="evidence" value="ECO:0007669"/>
    <property type="project" value="UniProtKB-UniRule"/>
</dbReference>
<dbReference type="CDD" id="cd02037">
    <property type="entry name" value="Mrp_NBP35"/>
    <property type="match status" value="1"/>
</dbReference>
<dbReference type="FunFam" id="3.40.50.300:FF:000796">
    <property type="entry name" value="Cytosolic Fe-S cluster assembly factor NUBP2"/>
    <property type="match status" value="1"/>
</dbReference>
<dbReference type="Gene3D" id="3.40.50.300">
    <property type="entry name" value="P-loop containing nucleotide triphosphate hydrolases"/>
    <property type="match status" value="1"/>
</dbReference>
<dbReference type="HAMAP" id="MF_02040">
    <property type="entry name" value="Mrp_NBP35"/>
    <property type="match status" value="1"/>
</dbReference>
<dbReference type="HAMAP" id="MF_03039">
    <property type="entry name" value="NUBP2"/>
    <property type="match status" value="1"/>
</dbReference>
<dbReference type="InterPro" id="IPR000808">
    <property type="entry name" value="Mrp-like_CS"/>
</dbReference>
<dbReference type="InterPro" id="IPR019591">
    <property type="entry name" value="Mrp/NBP35_ATP-bd"/>
</dbReference>
<dbReference type="InterPro" id="IPR028600">
    <property type="entry name" value="NUBP2/Cfd1_eukaryotes"/>
</dbReference>
<dbReference type="InterPro" id="IPR027417">
    <property type="entry name" value="P-loop_NTPase"/>
</dbReference>
<dbReference type="InterPro" id="IPR033756">
    <property type="entry name" value="YlxH/NBP35"/>
</dbReference>
<dbReference type="PANTHER" id="PTHR23264:SF19">
    <property type="entry name" value="CYTOSOLIC FE-S CLUSTER ASSEMBLY FACTOR NUBP2"/>
    <property type="match status" value="1"/>
</dbReference>
<dbReference type="PANTHER" id="PTHR23264">
    <property type="entry name" value="NUCLEOTIDE-BINDING PROTEIN NBP35 YEAST -RELATED"/>
    <property type="match status" value="1"/>
</dbReference>
<dbReference type="Pfam" id="PF10609">
    <property type="entry name" value="ParA"/>
    <property type="match status" value="1"/>
</dbReference>
<dbReference type="SUPFAM" id="SSF52540">
    <property type="entry name" value="P-loop containing nucleoside triphosphate hydrolases"/>
    <property type="match status" value="1"/>
</dbReference>
<dbReference type="PROSITE" id="PS01215">
    <property type="entry name" value="MRP"/>
    <property type="match status" value="1"/>
</dbReference>